<name>PSB28_PROM1</name>
<reference key="1">
    <citation type="journal article" date="2007" name="PLoS Genet.">
        <title>Patterns and implications of gene gain and loss in the evolution of Prochlorococcus.</title>
        <authorList>
            <person name="Kettler G.C."/>
            <person name="Martiny A.C."/>
            <person name="Huang K."/>
            <person name="Zucker J."/>
            <person name="Coleman M.L."/>
            <person name="Rodrigue S."/>
            <person name="Chen F."/>
            <person name="Lapidus A."/>
            <person name="Ferriera S."/>
            <person name="Johnson J."/>
            <person name="Steglich C."/>
            <person name="Church G.M."/>
            <person name="Richardson P."/>
            <person name="Chisholm S.W."/>
        </authorList>
    </citation>
    <scope>NUCLEOTIDE SEQUENCE [LARGE SCALE GENOMIC DNA]</scope>
    <source>
        <strain>NATL1A</strain>
    </source>
</reference>
<comment type="subunit">
    <text evidence="1">Part of the photosystem II complex.</text>
</comment>
<comment type="subcellular location">
    <subcellularLocation>
        <location evidence="1">Cellular thylakoid membrane</location>
        <topology evidence="1">Peripheral membrane protein</topology>
        <orientation evidence="1">Cytoplasmic side</orientation>
    </subcellularLocation>
</comment>
<comment type="similarity">
    <text evidence="1">Belongs to the Psb28 family.</text>
</comment>
<feature type="chain" id="PRO_1000068186" description="Photosystem II reaction center Psb28 protein">
    <location>
        <begin position="1"/>
        <end position="113"/>
    </location>
</feature>
<protein>
    <recommendedName>
        <fullName evidence="1">Photosystem II reaction center Psb28 protein</fullName>
    </recommendedName>
    <alternativeName>
        <fullName evidence="1">Photosystem II 13 kDa protein</fullName>
    </alternativeName>
    <alternativeName>
        <fullName evidence="1">Photosystem II reaction center W protein</fullName>
    </alternativeName>
</protein>
<accession>A2C1G5</accession>
<dbReference type="EMBL" id="CP000553">
    <property type="protein sequence ID" value="ABM75325.1"/>
    <property type="molecule type" value="Genomic_DNA"/>
</dbReference>
<dbReference type="RefSeq" id="WP_011823477.1">
    <property type="nucleotide sequence ID" value="NC_008819.1"/>
</dbReference>
<dbReference type="SMR" id="A2C1G5"/>
<dbReference type="KEGG" id="pme:NATL1_07671"/>
<dbReference type="eggNOG" id="ENOG5031GDS">
    <property type="taxonomic scope" value="Bacteria"/>
</dbReference>
<dbReference type="HOGENOM" id="CLU_137323_1_0_3"/>
<dbReference type="Proteomes" id="UP000002592">
    <property type="component" value="Chromosome"/>
</dbReference>
<dbReference type="GO" id="GO:0009654">
    <property type="term" value="C:photosystem II oxygen evolving complex"/>
    <property type="evidence" value="ECO:0007669"/>
    <property type="project" value="InterPro"/>
</dbReference>
<dbReference type="GO" id="GO:0031676">
    <property type="term" value="C:plasma membrane-derived thylakoid membrane"/>
    <property type="evidence" value="ECO:0007669"/>
    <property type="project" value="UniProtKB-SubCell"/>
</dbReference>
<dbReference type="GO" id="GO:0015979">
    <property type="term" value="P:photosynthesis"/>
    <property type="evidence" value="ECO:0007669"/>
    <property type="project" value="UniProtKB-UniRule"/>
</dbReference>
<dbReference type="Gene3D" id="2.40.30.220">
    <property type="entry name" value="Photosystem II Psb28"/>
    <property type="match status" value="1"/>
</dbReference>
<dbReference type="HAMAP" id="MF_01370">
    <property type="entry name" value="PSII_Psb28"/>
    <property type="match status" value="1"/>
</dbReference>
<dbReference type="InterPro" id="IPR038676">
    <property type="entry name" value="Psb28_c1_sf"/>
</dbReference>
<dbReference type="InterPro" id="IPR005610">
    <property type="entry name" value="PSII_Psb28_class-1"/>
</dbReference>
<dbReference type="NCBIfam" id="TIGR03047">
    <property type="entry name" value="PS_II_psb28"/>
    <property type="match status" value="1"/>
</dbReference>
<dbReference type="PANTHER" id="PTHR34963">
    <property type="match status" value="1"/>
</dbReference>
<dbReference type="PANTHER" id="PTHR34963:SF2">
    <property type="entry name" value="PHOTOSYSTEM II REACTION CENTER PSB28 PROTEIN, CHLOROPLASTIC"/>
    <property type="match status" value="1"/>
</dbReference>
<dbReference type="Pfam" id="PF03912">
    <property type="entry name" value="Psb28"/>
    <property type="match status" value="1"/>
</dbReference>
<gene>
    <name evidence="1" type="primary">psb28</name>
    <name type="ordered locus">NATL1_07671</name>
</gene>
<evidence type="ECO:0000255" key="1">
    <source>
        <dbReference type="HAMAP-Rule" id="MF_01370"/>
    </source>
</evidence>
<sequence length="113" mass="13184">MTKINENVAIQFVKGENEKDQPEIRLFRNLDGKNGKAVYKFYKPTTITLTNYKSVQRMFLIDSEGVLSTKKIDLSISEDHVKEVKSTYSWNSEEAFERFMRFASRYANSLSKN</sequence>
<organism>
    <name type="scientific">Prochlorococcus marinus (strain NATL1A)</name>
    <dbReference type="NCBI Taxonomy" id="167555"/>
    <lineage>
        <taxon>Bacteria</taxon>
        <taxon>Bacillati</taxon>
        <taxon>Cyanobacteriota</taxon>
        <taxon>Cyanophyceae</taxon>
        <taxon>Synechococcales</taxon>
        <taxon>Prochlorococcaceae</taxon>
        <taxon>Prochlorococcus</taxon>
    </lineage>
</organism>
<proteinExistence type="inferred from homology"/>
<keyword id="KW-0472">Membrane</keyword>
<keyword id="KW-0602">Photosynthesis</keyword>
<keyword id="KW-0604">Photosystem II</keyword>
<keyword id="KW-0793">Thylakoid</keyword>